<dbReference type="EMBL" id="CP000447">
    <property type="protein sequence ID" value="ABI73185.1"/>
    <property type="molecule type" value="Genomic_DNA"/>
</dbReference>
<dbReference type="RefSeq" id="WP_011638787.1">
    <property type="nucleotide sequence ID" value="NC_008345.1"/>
</dbReference>
<dbReference type="SMR" id="Q07XS9"/>
<dbReference type="STRING" id="318167.Sfri_3349"/>
<dbReference type="KEGG" id="sfr:Sfri_3349"/>
<dbReference type="eggNOG" id="COG0238">
    <property type="taxonomic scope" value="Bacteria"/>
</dbReference>
<dbReference type="HOGENOM" id="CLU_148710_2_3_6"/>
<dbReference type="OrthoDB" id="9812008at2"/>
<dbReference type="Proteomes" id="UP000000684">
    <property type="component" value="Chromosome"/>
</dbReference>
<dbReference type="GO" id="GO:0022627">
    <property type="term" value="C:cytosolic small ribosomal subunit"/>
    <property type="evidence" value="ECO:0007669"/>
    <property type="project" value="TreeGrafter"/>
</dbReference>
<dbReference type="GO" id="GO:0070181">
    <property type="term" value="F:small ribosomal subunit rRNA binding"/>
    <property type="evidence" value="ECO:0007669"/>
    <property type="project" value="TreeGrafter"/>
</dbReference>
<dbReference type="GO" id="GO:0003735">
    <property type="term" value="F:structural constituent of ribosome"/>
    <property type="evidence" value="ECO:0007669"/>
    <property type="project" value="InterPro"/>
</dbReference>
<dbReference type="GO" id="GO:0006412">
    <property type="term" value="P:translation"/>
    <property type="evidence" value="ECO:0007669"/>
    <property type="project" value="UniProtKB-UniRule"/>
</dbReference>
<dbReference type="FunFam" id="4.10.640.10:FF:000001">
    <property type="entry name" value="30S ribosomal protein S18"/>
    <property type="match status" value="1"/>
</dbReference>
<dbReference type="Gene3D" id="4.10.640.10">
    <property type="entry name" value="Ribosomal protein S18"/>
    <property type="match status" value="1"/>
</dbReference>
<dbReference type="HAMAP" id="MF_00270">
    <property type="entry name" value="Ribosomal_bS18"/>
    <property type="match status" value="1"/>
</dbReference>
<dbReference type="InterPro" id="IPR001648">
    <property type="entry name" value="Ribosomal_bS18"/>
</dbReference>
<dbReference type="InterPro" id="IPR018275">
    <property type="entry name" value="Ribosomal_bS18_CS"/>
</dbReference>
<dbReference type="InterPro" id="IPR036870">
    <property type="entry name" value="Ribosomal_bS18_sf"/>
</dbReference>
<dbReference type="NCBIfam" id="TIGR00165">
    <property type="entry name" value="S18"/>
    <property type="match status" value="1"/>
</dbReference>
<dbReference type="PANTHER" id="PTHR13479">
    <property type="entry name" value="30S RIBOSOMAL PROTEIN S18"/>
    <property type="match status" value="1"/>
</dbReference>
<dbReference type="PANTHER" id="PTHR13479:SF40">
    <property type="entry name" value="SMALL RIBOSOMAL SUBUNIT PROTEIN BS18M"/>
    <property type="match status" value="1"/>
</dbReference>
<dbReference type="Pfam" id="PF01084">
    <property type="entry name" value="Ribosomal_S18"/>
    <property type="match status" value="1"/>
</dbReference>
<dbReference type="PRINTS" id="PR00974">
    <property type="entry name" value="RIBOSOMALS18"/>
</dbReference>
<dbReference type="SUPFAM" id="SSF46911">
    <property type="entry name" value="Ribosomal protein S18"/>
    <property type="match status" value="1"/>
</dbReference>
<dbReference type="PROSITE" id="PS00057">
    <property type="entry name" value="RIBOSOMAL_S18"/>
    <property type="match status" value="1"/>
</dbReference>
<organism>
    <name type="scientific">Shewanella frigidimarina (strain NCIMB 400)</name>
    <dbReference type="NCBI Taxonomy" id="318167"/>
    <lineage>
        <taxon>Bacteria</taxon>
        <taxon>Pseudomonadati</taxon>
        <taxon>Pseudomonadota</taxon>
        <taxon>Gammaproteobacteria</taxon>
        <taxon>Alteromonadales</taxon>
        <taxon>Shewanellaceae</taxon>
        <taxon>Shewanella</taxon>
    </lineage>
</organism>
<accession>Q07XS9</accession>
<reference key="1">
    <citation type="submission" date="2006-08" db="EMBL/GenBank/DDBJ databases">
        <title>Complete sequence of Shewanella frigidimarina NCIMB 400.</title>
        <authorList>
            <consortium name="US DOE Joint Genome Institute"/>
            <person name="Copeland A."/>
            <person name="Lucas S."/>
            <person name="Lapidus A."/>
            <person name="Barry K."/>
            <person name="Detter J.C."/>
            <person name="Glavina del Rio T."/>
            <person name="Hammon N."/>
            <person name="Israni S."/>
            <person name="Dalin E."/>
            <person name="Tice H."/>
            <person name="Pitluck S."/>
            <person name="Fredrickson J.K."/>
            <person name="Kolker E."/>
            <person name="McCuel L.A."/>
            <person name="DiChristina T."/>
            <person name="Nealson K.H."/>
            <person name="Newman D."/>
            <person name="Tiedje J.M."/>
            <person name="Zhou J."/>
            <person name="Romine M.F."/>
            <person name="Culley D.E."/>
            <person name="Serres M."/>
            <person name="Chertkov O."/>
            <person name="Brettin T."/>
            <person name="Bruce D."/>
            <person name="Han C."/>
            <person name="Tapia R."/>
            <person name="Gilna P."/>
            <person name="Schmutz J."/>
            <person name="Larimer F."/>
            <person name="Land M."/>
            <person name="Hauser L."/>
            <person name="Kyrpides N."/>
            <person name="Mikhailova N."/>
            <person name="Richardson P."/>
        </authorList>
    </citation>
    <scope>NUCLEOTIDE SEQUENCE [LARGE SCALE GENOMIC DNA]</scope>
    <source>
        <strain>NCIMB 400</strain>
    </source>
</reference>
<comment type="function">
    <text evidence="1">Binds as a heterodimer with protein bS6 to the central domain of the 16S rRNA, where it helps stabilize the platform of the 30S subunit.</text>
</comment>
<comment type="subunit">
    <text evidence="1">Part of the 30S ribosomal subunit. Forms a tight heterodimer with protein bS6.</text>
</comment>
<comment type="similarity">
    <text evidence="1">Belongs to the bacterial ribosomal protein bS18 family.</text>
</comment>
<gene>
    <name evidence="1" type="primary">rpsR</name>
    <name type="ordered locus">Sfri_3349</name>
</gene>
<keyword id="KW-1185">Reference proteome</keyword>
<keyword id="KW-0687">Ribonucleoprotein</keyword>
<keyword id="KW-0689">Ribosomal protein</keyword>
<keyword id="KW-0694">RNA-binding</keyword>
<keyword id="KW-0699">rRNA-binding</keyword>
<evidence type="ECO:0000255" key="1">
    <source>
        <dbReference type="HAMAP-Rule" id="MF_00270"/>
    </source>
</evidence>
<evidence type="ECO:0000305" key="2"/>
<sequence length="75" mass="8917">MARYFRRRKFCRFTSEGVVEIDYKDIVTLKNYITESGKIVPSRITGTSARYQRQLARAIKRARYLSLLPYTDLHQ</sequence>
<proteinExistence type="inferred from homology"/>
<name>RS18_SHEFN</name>
<feature type="chain" id="PRO_1000003603" description="Small ribosomal subunit protein bS18">
    <location>
        <begin position="1"/>
        <end position="75"/>
    </location>
</feature>
<protein>
    <recommendedName>
        <fullName evidence="1">Small ribosomal subunit protein bS18</fullName>
    </recommendedName>
    <alternativeName>
        <fullName evidence="2">30S ribosomal protein S18</fullName>
    </alternativeName>
</protein>